<proteinExistence type="evidence at protein level"/>
<sequence length="270" mass="30541">MASRGVVGIFFLSAVPLVCLELRRGIPDIGIKDFLLLCGRILLLLALLTLIISVTTSWLNSFKSPQVYLKEEEEKNEKRQKLVRKKQQEAQGEKASRYIENVLKPHQEMKLRKLEERFYQMTGEAWKLSSGHKLGGDEGTSQTSFETSNREAAKSQNLPKPLTEFPSPAEQPTCKEIPDLPEEPSQTAEEVVTVALRCPSGNVLRRRFLKSYSSQVLFDWMTRIGYHISLYSLSTSFPRRPLAVEGGQSLEDIGITVDTVLILEEKEQTN</sequence>
<feature type="chain" id="PRO_0000211033" description="UBX domain-containing protein 8">
    <location>
        <begin position="1"/>
        <end position="270"/>
    </location>
</feature>
<feature type="topological domain" description="Cytoplasmic" evidence="1">
    <location>
        <position position="1"/>
    </location>
</feature>
<feature type="transmembrane region" description="Helical" evidence="1">
    <location>
        <begin position="2"/>
        <end position="22"/>
    </location>
</feature>
<feature type="topological domain" description="Lumenal" evidence="1">
    <location>
        <begin position="23"/>
        <end position="33"/>
    </location>
</feature>
<feature type="transmembrane region" description="Helical" evidence="1">
    <location>
        <begin position="34"/>
        <end position="54"/>
    </location>
</feature>
<feature type="topological domain" description="Cytoplasmic" evidence="1">
    <location>
        <begin position="55"/>
        <end position="270"/>
    </location>
</feature>
<feature type="domain" description="UBX" evidence="2">
    <location>
        <begin position="187"/>
        <end position="263"/>
    </location>
</feature>
<feature type="region of interest" description="Disordered" evidence="3">
    <location>
        <begin position="130"/>
        <end position="171"/>
    </location>
</feature>
<feature type="modified residue" description="Phosphoserine" evidence="7">
    <location>
        <position position="167"/>
    </location>
</feature>
<feature type="splice variant" id="VSP_015535" description="In isoform 3." evidence="6">
    <location>
        <begin position="30"/>
        <end position="66"/>
    </location>
</feature>
<feature type="splice variant" id="VSP_004376" description="In isoform 2." evidence="5">
    <location>
        <begin position="95"/>
        <end position="135"/>
    </location>
</feature>
<feature type="sequence variant" id="VAR_052687" description="In dbSNP:rs3174043.">
    <original>V</original>
    <variation>M</variation>
    <location>
        <position position="18"/>
    </location>
</feature>
<feature type="sequence variant" id="VAR_052688" description="In dbSNP:rs2911690.">
    <original>I</original>
    <variation>T</variation>
    <location>
        <position position="51"/>
    </location>
</feature>
<reference key="1">
    <citation type="journal article" date="1997" name="Genomics">
        <title>Cloning and characterization of Rep-8 (D8S2298E) in the human chromosome 8p11.2-p12.</title>
        <authorList>
            <person name="Yamabe Y."/>
            <person name="Ichikawa K."/>
            <person name="Sugawara K."/>
            <person name="Imamura O."/>
            <person name="Shimamoto A."/>
            <person name="Suzuki N."/>
            <person name="Tokutake Y."/>
            <person name="Goto M."/>
            <person name="Sugawara M."/>
            <person name="Furuichi Y."/>
        </authorList>
    </citation>
    <scope>NUCLEOTIDE SEQUENCE [MRNA] (ISOFORMS 1 AND 2)</scope>
    <source>
        <tissue>Embryonic carcinoma</tissue>
    </source>
</reference>
<reference key="2">
    <citation type="submission" date="2003-05" db="EMBL/GenBank/DDBJ databases">
        <authorList>
            <person name="Lin L."/>
            <person name="Zheng G."/>
            <person name="Li H."/>
            <person name="Zhou G."/>
            <person name="Ke R."/>
            <person name="Shen C."/>
            <person name="Li M."/>
            <person name="Xiao W."/>
            <person name="Zhong G."/>
            <person name="Yu R."/>
            <person name="Yang S."/>
        </authorList>
    </citation>
    <scope>NUCLEOTIDE SEQUENCE [LARGE SCALE MRNA] (ISOFORM 3)</scope>
</reference>
<reference key="3">
    <citation type="journal article" date="2004" name="Genome Res.">
        <title>The status, quality, and expansion of the NIH full-length cDNA project: the Mammalian Gene Collection (MGC).</title>
        <authorList>
            <consortium name="The MGC Project Team"/>
        </authorList>
    </citation>
    <scope>NUCLEOTIDE SEQUENCE [LARGE SCALE MRNA] (ISOFORM 1)</scope>
    <source>
        <tissue>Testis</tissue>
    </source>
</reference>
<reference key="4">
    <citation type="journal article" date="2008" name="Proc. Natl. Acad. Sci. U.S.A.">
        <title>A quantitative atlas of mitotic phosphorylation.</title>
        <authorList>
            <person name="Dephoure N."/>
            <person name="Zhou C."/>
            <person name="Villen J."/>
            <person name="Beausoleil S.A."/>
            <person name="Bakalarski C.E."/>
            <person name="Elledge S.J."/>
            <person name="Gygi S.P."/>
        </authorList>
    </citation>
    <scope>PHOSPHORYLATION [LARGE SCALE ANALYSIS] AT SER-167</scope>
    <scope>IDENTIFICATION BY MASS SPECTROMETRY [LARGE SCALE ANALYSIS]</scope>
    <source>
        <tissue>Cervix carcinoma</tissue>
    </source>
</reference>
<reference key="5">
    <citation type="journal article" date="2010" name="Sci. Signal.">
        <title>Quantitative phosphoproteomics reveals widespread full phosphorylation site occupancy during mitosis.</title>
        <authorList>
            <person name="Olsen J.V."/>
            <person name="Vermeulen M."/>
            <person name="Santamaria A."/>
            <person name="Kumar C."/>
            <person name="Miller M.L."/>
            <person name="Jensen L.J."/>
            <person name="Gnad F."/>
            <person name="Cox J."/>
            <person name="Jensen T.S."/>
            <person name="Nigg E.A."/>
            <person name="Brunak S."/>
            <person name="Mann M."/>
        </authorList>
    </citation>
    <scope>IDENTIFICATION BY MASS SPECTROMETRY [LARGE SCALE ANALYSIS]</scope>
    <source>
        <tissue>Cervix carcinoma</tissue>
    </source>
</reference>
<reference key="6">
    <citation type="journal article" date="2011" name="PLoS ONE">
        <title>The tissue-specific Rep8/UBXD6 tethers p97 to the endoplasmic reticulum membrane for degradation of misfolded proteins.</title>
        <authorList>
            <person name="Madsen L."/>
            <person name="Kriegenburg F."/>
            <person name="Vala A."/>
            <person name="Best D."/>
            <person name="Prag S."/>
            <person name="Hofmann K."/>
            <person name="Seeger M."/>
            <person name="Adams I.R."/>
            <person name="Hartmann-Petersen R."/>
        </authorList>
    </citation>
    <scope>FUNCTION</scope>
    <scope>SUBCELLULAR LOCATION</scope>
    <scope>INTERACTION WITH SYVN1 AND VCP</scope>
</reference>
<gene>
    <name type="primary">UBXN8</name>
    <name type="synonym">D8S2298E</name>
    <name type="synonym">REP8</name>
    <name type="synonym">UBXD6</name>
</gene>
<evidence type="ECO:0000255" key="1"/>
<evidence type="ECO:0000255" key="2">
    <source>
        <dbReference type="PROSITE-ProRule" id="PRU00215"/>
    </source>
</evidence>
<evidence type="ECO:0000256" key="3">
    <source>
        <dbReference type="SAM" id="MobiDB-lite"/>
    </source>
</evidence>
<evidence type="ECO:0000269" key="4">
    <source>
    </source>
</evidence>
<evidence type="ECO:0000303" key="5">
    <source>
    </source>
</evidence>
<evidence type="ECO:0000303" key="6">
    <source ref="2"/>
</evidence>
<evidence type="ECO:0007744" key="7">
    <source>
    </source>
</evidence>
<accession>O00124</accession>
<accession>Q7Z6F2</accession>
<name>UBXN8_HUMAN</name>
<comment type="function">
    <text evidence="4">Involved in endoplasmic reticulum-associated degradation (ERAD) for misfolded lumenal proteins, possibly by tethering VCP to the endoplasmic reticulum membrane. May play a role in reproduction.</text>
</comment>
<comment type="subunit">
    <text evidence="4">Interacts with SYVN1 and VCP.</text>
</comment>
<comment type="interaction">
    <interactant intactId="EBI-1993850">
        <id>O00124</id>
    </interactant>
    <interactant intactId="EBI-13059134">
        <id>Q13520</id>
        <label>AQP6</label>
    </interactant>
    <organismsDiffer>false</organismsDiffer>
    <experiments>3</experiments>
</comment>
<comment type="interaction">
    <interactant intactId="EBI-1993850">
        <id>O00124</id>
    </interactant>
    <interactant intactId="EBI-744302">
        <id>P14136</id>
        <label>GFAP</label>
    </interactant>
    <organismsDiffer>false</organismsDiffer>
    <experiments>3</experiments>
</comment>
<comment type="interaction">
    <interactant intactId="EBI-1993850">
        <id>O00124</id>
    </interactant>
    <interactant intactId="EBI-17458373">
        <id>P48165</id>
        <label>GJA8</label>
    </interactant>
    <organismsDiffer>false</organismsDiffer>
    <experiments>3</experiments>
</comment>
<comment type="interaction">
    <interactant intactId="EBI-1993850">
        <id>O00124</id>
    </interactant>
    <interactant intactId="EBI-18053395">
        <id>Q7Z5P4</id>
        <label>HSD17B13</label>
    </interactant>
    <organismsDiffer>false</organismsDiffer>
    <experiments>3</experiments>
</comment>
<comment type="interaction">
    <interactant intactId="EBI-1993850">
        <id>O00124</id>
    </interactant>
    <interactant intactId="EBI-16439278">
        <id>Q6FHY5</id>
        <label>MEOX2</label>
    </interactant>
    <organismsDiffer>false</organismsDiffer>
    <experiments>3</experiments>
</comment>
<comment type="interaction">
    <interactant intactId="EBI-1993850">
        <id>O00124</id>
    </interactant>
    <interactant intactId="EBI-1050125">
        <id>O15173</id>
        <label>PGRMC2</label>
    </interactant>
    <organismsDiffer>false</organismsDiffer>
    <experiments>3</experiments>
</comment>
<comment type="interaction">
    <interactant intactId="EBI-1993850">
        <id>O00124</id>
    </interactant>
    <interactant intactId="EBI-8638294">
        <id>Q9NUH8</id>
        <label>TMEM14B</label>
    </interactant>
    <organismsDiffer>false</organismsDiffer>
    <experiments>3</experiments>
</comment>
<comment type="interaction">
    <interactant intactId="EBI-1993850">
        <id>O00124</id>
    </interactant>
    <interactant intactId="EBI-355164">
        <id>P55072</id>
        <label>VCP</label>
    </interactant>
    <organismsDiffer>false</organismsDiffer>
    <experiments>9</experiments>
</comment>
<comment type="subcellular location">
    <subcellularLocation>
        <location evidence="4">Endoplasmic reticulum membrane</location>
        <topology evidence="4">Multi-pass membrane protein</topology>
    </subcellularLocation>
</comment>
<comment type="alternative products">
    <event type="alternative splicing"/>
    <isoform>
        <id>O00124-1</id>
        <name>1</name>
        <name>Long</name>
        <sequence type="displayed"/>
    </isoform>
    <isoform>
        <id>O00124-2</id>
        <name>2</name>
        <name>Short</name>
        <sequence type="described" ref="VSP_004376"/>
    </isoform>
    <isoform>
        <id>O00124-3</id>
        <name>3</name>
        <sequence type="described" ref="VSP_015535"/>
    </isoform>
</comment>
<comment type="tissue specificity">
    <text>Expressed abundantly in ovary and testis, and weakly in all other tissues tested.</text>
</comment>
<organism>
    <name type="scientific">Homo sapiens</name>
    <name type="common">Human</name>
    <dbReference type="NCBI Taxonomy" id="9606"/>
    <lineage>
        <taxon>Eukaryota</taxon>
        <taxon>Metazoa</taxon>
        <taxon>Chordata</taxon>
        <taxon>Craniata</taxon>
        <taxon>Vertebrata</taxon>
        <taxon>Euteleostomi</taxon>
        <taxon>Mammalia</taxon>
        <taxon>Eutheria</taxon>
        <taxon>Euarchontoglires</taxon>
        <taxon>Primates</taxon>
        <taxon>Haplorrhini</taxon>
        <taxon>Catarrhini</taxon>
        <taxon>Hominidae</taxon>
        <taxon>Homo</taxon>
    </lineage>
</organism>
<dbReference type="EMBL" id="D83767">
    <property type="protein sequence ID" value="BAA18958.1"/>
    <property type="molecule type" value="mRNA"/>
</dbReference>
<dbReference type="EMBL" id="D83768">
    <property type="protein sequence ID" value="BAA18959.1"/>
    <property type="molecule type" value="mRNA"/>
</dbReference>
<dbReference type="EMBL" id="AY302140">
    <property type="protein sequence ID" value="AAP57632.1"/>
    <property type="molecule type" value="mRNA"/>
</dbReference>
<dbReference type="EMBL" id="BC020694">
    <property type="protein sequence ID" value="AAH20694.1"/>
    <property type="molecule type" value="mRNA"/>
</dbReference>
<dbReference type="CCDS" id="CCDS75723.1">
    <molecule id="O00124-1"/>
</dbReference>
<dbReference type="CCDS" id="CCDS75724.1">
    <molecule id="O00124-2"/>
</dbReference>
<dbReference type="CCDS" id="CCDS75725.1">
    <molecule id="O00124-3"/>
</dbReference>
<dbReference type="RefSeq" id="NP_001269118.1">
    <molecule id="O00124-3"/>
    <property type="nucleotide sequence ID" value="NM_001282189.2"/>
</dbReference>
<dbReference type="RefSeq" id="NP_001269128.1">
    <property type="nucleotide sequence ID" value="NM_001282199.1"/>
</dbReference>
<dbReference type="RefSeq" id="NP_005662.1">
    <property type="nucleotide sequence ID" value="NM_005671.3"/>
</dbReference>
<dbReference type="RefSeq" id="XP_054217256.1">
    <molecule id="O00124-1"/>
    <property type="nucleotide sequence ID" value="XM_054361281.1"/>
</dbReference>
<dbReference type="SMR" id="O00124"/>
<dbReference type="BioGRID" id="113702">
    <property type="interactions" value="98"/>
</dbReference>
<dbReference type="FunCoup" id="O00124">
    <property type="interactions" value="557"/>
</dbReference>
<dbReference type="IntAct" id="O00124">
    <property type="interactions" value="35"/>
</dbReference>
<dbReference type="MINT" id="O00124"/>
<dbReference type="STRING" id="9606.ENSP00000479216"/>
<dbReference type="iPTMnet" id="O00124"/>
<dbReference type="PhosphoSitePlus" id="O00124"/>
<dbReference type="BioMuta" id="UBXN8"/>
<dbReference type="jPOST" id="O00124"/>
<dbReference type="MassIVE" id="O00124"/>
<dbReference type="PaxDb" id="9606-ENSP00000479216"/>
<dbReference type="PeptideAtlas" id="O00124"/>
<dbReference type="ProteomicsDB" id="47719">
    <molecule id="O00124-1"/>
</dbReference>
<dbReference type="ProteomicsDB" id="47720">
    <molecule id="O00124-2"/>
</dbReference>
<dbReference type="ProteomicsDB" id="47721">
    <molecule id="O00124-3"/>
</dbReference>
<dbReference type="Pumba" id="O00124"/>
<dbReference type="Antibodypedia" id="2989">
    <property type="antibodies" value="98 antibodies from 16 providers"/>
</dbReference>
<dbReference type="DNASU" id="7993"/>
<dbReference type="Ensembl" id="ENST00000615729.4">
    <molecule id="O00124-3"/>
    <property type="protein sequence ID" value="ENSP00000481635.1"/>
    <property type="gene ID" value="ENSG00000104691.16"/>
</dbReference>
<dbReference type="GeneID" id="7993"/>
<dbReference type="KEGG" id="hsa:7993"/>
<dbReference type="UCSC" id="uc033bgi.2">
    <molecule id="O00124-1"/>
    <property type="organism name" value="human"/>
</dbReference>
<dbReference type="AGR" id="HGNC:30307"/>
<dbReference type="CTD" id="7993"/>
<dbReference type="DisGeNET" id="7993"/>
<dbReference type="GeneCards" id="UBXN8"/>
<dbReference type="HGNC" id="HGNC:30307">
    <property type="gene designation" value="UBXN8"/>
</dbReference>
<dbReference type="HPA" id="ENSG00000104691">
    <property type="expression patterns" value="Tissue enhanced (ovary)"/>
</dbReference>
<dbReference type="MIM" id="602155">
    <property type="type" value="gene"/>
</dbReference>
<dbReference type="neXtProt" id="NX_O00124"/>
<dbReference type="OpenTargets" id="ENSG00000104691"/>
<dbReference type="PharmGKB" id="PA162408474"/>
<dbReference type="VEuPathDB" id="HostDB:ENSG00000104691"/>
<dbReference type="eggNOG" id="KOG1363">
    <property type="taxonomic scope" value="Eukaryota"/>
</dbReference>
<dbReference type="GeneTree" id="ENSGT00390000018326"/>
<dbReference type="HOGENOM" id="CLU_077976_0_0_1"/>
<dbReference type="InParanoid" id="O00124"/>
<dbReference type="OrthoDB" id="1920064at2759"/>
<dbReference type="PAN-GO" id="O00124">
    <property type="GO annotations" value="3 GO annotations based on evolutionary models"/>
</dbReference>
<dbReference type="PhylomeDB" id="O00124"/>
<dbReference type="PathwayCommons" id="O00124"/>
<dbReference type="SignaLink" id="O00124"/>
<dbReference type="SIGNOR" id="O00124"/>
<dbReference type="BioGRID-ORCS" id="7993">
    <property type="hits" value="11 hits in 267 CRISPR screens"/>
</dbReference>
<dbReference type="ChiTaRS" id="UBXN8">
    <property type="organism name" value="human"/>
</dbReference>
<dbReference type="GenomeRNAi" id="7993"/>
<dbReference type="Pharos" id="O00124">
    <property type="development level" value="Tbio"/>
</dbReference>
<dbReference type="PRO" id="PR:O00124"/>
<dbReference type="Proteomes" id="UP000005640">
    <property type="component" value="Chromosome 8"/>
</dbReference>
<dbReference type="RNAct" id="O00124">
    <property type="molecule type" value="protein"/>
</dbReference>
<dbReference type="Bgee" id="ENSG00000104691">
    <property type="expression patterns" value="Expressed in left ovary and 152 other cell types or tissues"/>
</dbReference>
<dbReference type="ExpressionAtlas" id="O00124">
    <property type="expression patterns" value="baseline and differential"/>
</dbReference>
<dbReference type="GO" id="GO:0005783">
    <property type="term" value="C:endoplasmic reticulum"/>
    <property type="evidence" value="ECO:0000314"/>
    <property type="project" value="HPA"/>
</dbReference>
<dbReference type="GO" id="GO:0005789">
    <property type="term" value="C:endoplasmic reticulum membrane"/>
    <property type="evidence" value="ECO:0000314"/>
    <property type="project" value="UniProtKB"/>
</dbReference>
<dbReference type="GO" id="GO:0005730">
    <property type="term" value="C:nucleolus"/>
    <property type="evidence" value="ECO:0000314"/>
    <property type="project" value="HPA"/>
</dbReference>
<dbReference type="GO" id="GO:0005654">
    <property type="term" value="C:nucleoplasm"/>
    <property type="evidence" value="ECO:0000314"/>
    <property type="project" value="HPA"/>
</dbReference>
<dbReference type="GO" id="GO:0000151">
    <property type="term" value="C:ubiquitin ligase complex"/>
    <property type="evidence" value="ECO:0000250"/>
    <property type="project" value="FlyBase"/>
</dbReference>
<dbReference type="GO" id="GO:0030674">
    <property type="term" value="F:protein-macromolecule adaptor activity"/>
    <property type="evidence" value="ECO:0000250"/>
    <property type="project" value="FlyBase"/>
</dbReference>
<dbReference type="GO" id="GO:0043130">
    <property type="term" value="F:ubiquitin binding"/>
    <property type="evidence" value="ECO:0000318"/>
    <property type="project" value="GO_Central"/>
</dbReference>
<dbReference type="GO" id="GO:0036503">
    <property type="term" value="P:ERAD pathway"/>
    <property type="evidence" value="ECO:0000315"/>
    <property type="project" value="UniProtKB"/>
</dbReference>
<dbReference type="GO" id="GO:0007338">
    <property type="term" value="P:single fertilization"/>
    <property type="evidence" value="ECO:0000304"/>
    <property type="project" value="ProtInc"/>
</dbReference>
<dbReference type="FunFam" id="3.10.20.90:FF:000184">
    <property type="entry name" value="UBX domain-containing protein 8 isoform X1"/>
    <property type="match status" value="1"/>
</dbReference>
<dbReference type="Gene3D" id="3.10.20.90">
    <property type="entry name" value="Phosphatidylinositol 3-kinase Catalytic Subunit, Chain A, domain 1"/>
    <property type="match status" value="1"/>
</dbReference>
<dbReference type="InterPro" id="IPR029071">
    <property type="entry name" value="Ubiquitin-like_domsf"/>
</dbReference>
<dbReference type="InterPro" id="IPR001012">
    <property type="entry name" value="UBX_dom"/>
</dbReference>
<dbReference type="InterPro" id="IPR050730">
    <property type="entry name" value="UBX_domain-protein"/>
</dbReference>
<dbReference type="InterPro" id="IPR017247">
    <property type="entry name" value="UBXN8"/>
</dbReference>
<dbReference type="PANTHER" id="PTHR23322">
    <property type="entry name" value="FAS-ASSOCIATED PROTEIN"/>
    <property type="match status" value="1"/>
</dbReference>
<dbReference type="PANTHER" id="PTHR23322:SF93">
    <property type="entry name" value="UBX DOMAIN-CONTAINING PROTEIN 8"/>
    <property type="match status" value="1"/>
</dbReference>
<dbReference type="Pfam" id="PF00789">
    <property type="entry name" value="UBX"/>
    <property type="match status" value="1"/>
</dbReference>
<dbReference type="PIRSF" id="PIRSF037632">
    <property type="entry name" value="UBX_Rep6"/>
    <property type="match status" value="1"/>
</dbReference>
<dbReference type="SUPFAM" id="SSF54236">
    <property type="entry name" value="Ubiquitin-like"/>
    <property type="match status" value="1"/>
</dbReference>
<dbReference type="PROSITE" id="PS50033">
    <property type="entry name" value="UBX"/>
    <property type="match status" value="1"/>
</dbReference>
<protein>
    <recommendedName>
        <fullName>UBX domain-containing protein 8</fullName>
    </recommendedName>
    <alternativeName>
        <fullName>Reproduction 8 protein</fullName>
        <shortName>Rep-8 protein</shortName>
    </alternativeName>
    <alternativeName>
        <fullName>UBX domain-containing protein 6</fullName>
    </alternativeName>
</protein>
<keyword id="KW-0025">Alternative splicing</keyword>
<keyword id="KW-0256">Endoplasmic reticulum</keyword>
<keyword id="KW-0472">Membrane</keyword>
<keyword id="KW-0597">Phosphoprotein</keyword>
<keyword id="KW-1267">Proteomics identification</keyword>
<keyword id="KW-1185">Reference proteome</keyword>
<keyword id="KW-0812">Transmembrane</keyword>
<keyword id="KW-1133">Transmembrane helix</keyword>